<proteinExistence type="inferred from homology"/>
<gene>
    <name evidence="1" type="primary">panB</name>
    <name type="ordered locus">tlr0279</name>
</gene>
<comment type="function">
    <text evidence="1">Catalyzes the reversible reaction in which hydroxymethyl group from 5,10-methylenetetrahydrofolate is transferred onto alpha-ketoisovalerate to form ketopantoate.</text>
</comment>
<comment type="catalytic activity">
    <reaction evidence="1">
        <text>3-methyl-2-oxobutanoate + (6R)-5,10-methylene-5,6,7,8-tetrahydrofolate + H2O = 2-dehydropantoate + (6S)-5,6,7,8-tetrahydrofolate</text>
        <dbReference type="Rhea" id="RHEA:11824"/>
        <dbReference type="ChEBI" id="CHEBI:11561"/>
        <dbReference type="ChEBI" id="CHEBI:11851"/>
        <dbReference type="ChEBI" id="CHEBI:15377"/>
        <dbReference type="ChEBI" id="CHEBI:15636"/>
        <dbReference type="ChEBI" id="CHEBI:57453"/>
        <dbReference type="EC" id="2.1.2.11"/>
    </reaction>
</comment>
<comment type="cofactor">
    <cofactor evidence="1">
        <name>Mg(2+)</name>
        <dbReference type="ChEBI" id="CHEBI:18420"/>
    </cofactor>
    <text evidence="1">Binds 1 Mg(2+) ion per subunit.</text>
</comment>
<comment type="pathway">
    <text evidence="1">Cofactor biosynthesis; (R)-pantothenate biosynthesis; (R)-pantoate from 3-methyl-2-oxobutanoate: step 1/2.</text>
</comment>
<comment type="subunit">
    <text evidence="1">Homodecamer; pentamer of dimers.</text>
</comment>
<comment type="subcellular location">
    <subcellularLocation>
        <location evidence="1">Cytoplasm</location>
    </subcellularLocation>
</comment>
<comment type="similarity">
    <text evidence="1">Belongs to the PanB family.</text>
</comment>
<comment type="sequence caution" evidence="2">
    <conflict type="erroneous initiation">
        <sequence resource="EMBL-CDS" id="BAC07832"/>
    </conflict>
</comment>
<evidence type="ECO:0000255" key="1">
    <source>
        <dbReference type="HAMAP-Rule" id="MF_00156"/>
    </source>
</evidence>
<evidence type="ECO:0000305" key="2"/>
<dbReference type="EC" id="2.1.2.11" evidence="1"/>
<dbReference type="EMBL" id="BA000039">
    <property type="protein sequence ID" value="BAC07832.1"/>
    <property type="status" value="ALT_INIT"/>
    <property type="molecule type" value="Genomic_DNA"/>
</dbReference>
<dbReference type="RefSeq" id="NP_681070.1">
    <property type="nucleotide sequence ID" value="NC_004113.1"/>
</dbReference>
<dbReference type="SMR" id="Q8DM44"/>
<dbReference type="STRING" id="197221.gene:10746862"/>
<dbReference type="EnsemblBacteria" id="BAC07832">
    <property type="protein sequence ID" value="BAC07832"/>
    <property type="gene ID" value="BAC07832"/>
</dbReference>
<dbReference type="KEGG" id="tel:tlr0279"/>
<dbReference type="PATRIC" id="fig|197221.4.peg.293"/>
<dbReference type="eggNOG" id="COG0413">
    <property type="taxonomic scope" value="Bacteria"/>
</dbReference>
<dbReference type="UniPathway" id="UPA00028">
    <property type="reaction ID" value="UER00003"/>
</dbReference>
<dbReference type="Proteomes" id="UP000000440">
    <property type="component" value="Chromosome"/>
</dbReference>
<dbReference type="GO" id="GO:0005737">
    <property type="term" value="C:cytoplasm"/>
    <property type="evidence" value="ECO:0007669"/>
    <property type="project" value="UniProtKB-SubCell"/>
</dbReference>
<dbReference type="GO" id="GO:0003864">
    <property type="term" value="F:3-methyl-2-oxobutanoate hydroxymethyltransferase activity"/>
    <property type="evidence" value="ECO:0007669"/>
    <property type="project" value="UniProtKB-UniRule"/>
</dbReference>
<dbReference type="GO" id="GO:0000287">
    <property type="term" value="F:magnesium ion binding"/>
    <property type="evidence" value="ECO:0007669"/>
    <property type="project" value="TreeGrafter"/>
</dbReference>
<dbReference type="GO" id="GO:0015940">
    <property type="term" value="P:pantothenate biosynthetic process"/>
    <property type="evidence" value="ECO:0007669"/>
    <property type="project" value="UniProtKB-UniRule"/>
</dbReference>
<dbReference type="CDD" id="cd06557">
    <property type="entry name" value="KPHMT-like"/>
    <property type="match status" value="1"/>
</dbReference>
<dbReference type="FunFam" id="3.20.20.60:FF:000003">
    <property type="entry name" value="3-methyl-2-oxobutanoate hydroxymethyltransferase"/>
    <property type="match status" value="1"/>
</dbReference>
<dbReference type="Gene3D" id="3.20.20.60">
    <property type="entry name" value="Phosphoenolpyruvate-binding domains"/>
    <property type="match status" value="1"/>
</dbReference>
<dbReference type="HAMAP" id="MF_00156">
    <property type="entry name" value="PanB"/>
    <property type="match status" value="1"/>
</dbReference>
<dbReference type="InterPro" id="IPR003700">
    <property type="entry name" value="Pantoate_hydroxy_MeTrfase"/>
</dbReference>
<dbReference type="InterPro" id="IPR015813">
    <property type="entry name" value="Pyrv/PenolPyrv_kinase-like_dom"/>
</dbReference>
<dbReference type="InterPro" id="IPR040442">
    <property type="entry name" value="Pyrv_kinase-like_dom_sf"/>
</dbReference>
<dbReference type="NCBIfam" id="TIGR00222">
    <property type="entry name" value="panB"/>
    <property type="match status" value="1"/>
</dbReference>
<dbReference type="NCBIfam" id="NF001452">
    <property type="entry name" value="PRK00311.1"/>
    <property type="match status" value="1"/>
</dbReference>
<dbReference type="PANTHER" id="PTHR20881">
    <property type="entry name" value="3-METHYL-2-OXOBUTANOATE HYDROXYMETHYLTRANSFERASE"/>
    <property type="match status" value="1"/>
</dbReference>
<dbReference type="PANTHER" id="PTHR20881:SF0">
    <property type="entry name" value="3-METHYL-2-OXOBUTANOATE HYDROXYMETHYLTRANSFERASE"/>
    <property type="match status" value="1"/>
</dbReference>
<dbReference type="Pfam" id="PF02548">
    <property type="entry name" value="Pantoate_transf"/>
    <property type="match status" value="1"/>
</dbReference>
<dbReference type="PIRSF" id="PIRSF000388">
    <property type="entry name" value="Pantoate_hydroxy_MeTrfase"/>
    <property type="match status" value="1"/>
</dbReference>
<dbReference type="SUPFAM" id="SSF51621">
    <property type="entry name" value="Phosphoenolpyruvate/pyruvate domain"/>
    <property type="match status" value="1"/>
</dbReference>
<name>PANB_THEVB</name>
<accession>Q8DM44</accession>
<organism>
    <name type="scientific">Thermosynechococcus vestitus (strain NIES-2133 / IAM M-273 / BP-1)</name>
    <dbReference type="NCBI Taxonomy" id="197221"/>
    <lineage>
        <taxon>Bacteria</taxon>
        <taxon>Bacillati</taxon>
        <taxon>Cyanobacteriota</taxon>
        <taxon>Cyanophyceae</taxon>
        <taxon>Acaryochloridales</taxon>
        <taxon>Thermosynechococcaceae</taxon>
        <taxon>Thermosynechococcus</taxon>
    </lineage>
</organism>
<protein>
    <recommendedName>
        <fullName evidence="1">3-methyl-2-oxobutanoate hydroxymethyltransferase</fullName>
        <ecNumber evidence="1">2.1.2.11</ecNumber>
    </recommendedName>
    <alternativeName>
        <fullName evidence="1">Ketopantoate hydroxymethyltransferase</fullName>
        <shortName evidence="1">KPHMT</shortName>
    </alternativeName>
</protein>
<feature type="chain" id="PRO_0000184898" description="3-methyl-2-oxobutanoate hydroxymethyltransferase">
    <location>
        <begin position="1"/>
        <end position="261"/>
    </location>
</feature>
<feature type="active site" description="Proton acceptor" evidence="1">
    <location>
        <position position="186"/>
    </location>
</feature>
<feature type="binding site" evidence="1">
    <location>
        <begin position="47"/>
        <end position="48"/>
    </location>
    <ligand>
        <name>3-methyl-2-oxobutanoate</name>
        <dbReference type="ChEBI" id="CHEBI:11851"/>
    </ligand>
</feature>
<feature type="binding site" evidence="1">
    <location>
        <position position="47"/>
    </location>
    <ligand>
        <name>Mg(2+)</name>
        <dbReference type="ChEBI" id="CHEBI:18420"/>
    </ligand>
</feature>
<feature type="binding site" evidence="1">
    <location>
        <position position="86"/>
    </location>
    <ligand>
        <name>3-methyl-2-oxobutanoate</name>
        <dbReference type="ChEBI" id="CHEBI:11851"/>
    </ligand>
</feature>
<feature type="binding site" evidence="1">
    <location>
        <position position="86"/>
    </location>
    <ligand>
        <name>Mg(2+)</name>
        <dbReference type="ChEBI" id="CHEBI:18420"/>
    </ligand>
</feature>
<feature type="binding site" evidence="1">
    <location>
        <position position="116"/>
    </location>
    <ligand>
        <name>3-methyl-2-oxobutanoate</name>
        <dbReference type="ChEBI" id="CHEBI:11851"/>
    </ligand>
</feature>
<feature type="binding site" evidence="1">
    <location>
        <position position="118"/>
    </location>
    <ligand>
        <name>Mg(2+)</name>
        <dbReference type="ChEBI" id="CHEBI:18420"/>
    </ligand>
</feature>
<reference key="1">
    <citation type="journal article" date="2002" name="DNA Res.">
        <title>Complete genome structure of the thermophilic cyanobacterium Thermosynechococcus elongatus BP-1.</title>
        <authorList>
            <person name="Nakamura Y."/>
            <person name="Kaneko T."/>
            <person name="Sato S."/>
            <person name="Ikeuchi M."/>
            <person name="Katoh H."/>
            <person name="Sasamoto S."/>
            <person name="Watanabe A."/>
            <person name="Iriguchi M."/>
            <person name="Kawashima K."/>
            <person name="Kimura T."/>
            <person name="Kishida Y."/>
            <person name="Kiyokawa C."/>
            <person name="Kohara M."/>
            <person name="Matsumoto M."/>
            <person name="Matsuno A."/>
            <person name="Nakazaki N."/>
            <person name="Shimpo S."/>
            <person name="Sugimoto M."/>
            <person name="Takeuchi C."/>
            <person name="Yamada M."/>
            <person name="Tabata S."/>
        </authorList>
    </citation>
    <scope>NUCLEOTIDE SEQUENCE [LARGE SCALE GENOMIC DNA]</scope>
    <source>
        <strain>NIES-2133 / IAM M-273 / BP-1</strain>
    </source>
</reference>
<keyword id="KW-0963">Cytoplasm</keyword>
<keyword id="KW-0460">Magnesium</keyword>
<keyword id="KW-0479">Metal-binding</keyword>
<keyword id="KW-0566">Pantothenate biosynthesis</keyword>
<keyword id="KW-1185">Reference proteome</keyword>
<keyword id="KW-0808">Transferase</keyword>
<sequence>MVRRSVTLPQLQAKKALGEPITMLTAWDYLWARLLDAAGVDVILVGDSLGMVALGYPTTLPVTLDQMIHHAQAVRRGVSHSFLVCDLPFLSYQESPEQALRSAGRLIKEAEVQAVKMEGASPVVQAATRRLVEAGIPVLGHVGLLPQRVHQLGGWRQQGNTPQDAAAILAGALALAEAGVFAVILEHIPAALAQQITAQLKIPTIGIGAGPHCDGQVLVTADVLGLSPQVPPFAKVYADLGTQAIAAIENYCQAVKSRQFP</sequence>